<sequence>MKHKVKNIHFVGIGGSGMSGIAEVLLNLGYTISGSDLGSNAATRRLVELGAKVTLGHAAENIASADAIVTSTAVQQDNPEVVAAREKHIPIVPRAMMLAELMRLRRGIAIAGTHGKTTTTSLVASVLAEGGLDPTFVIGGLLNSAGANAKLGAGEFIVAEADESDASFLNLSPVIEVITNIDADHMETYEHDFEKLKQAFVEFTQRLPFYGVAVLCLDDATVREIMPRISKLITTYGFHEDAMVRAVDAKAVDGHMQFTVIQDGYAPMQVSLNQPGMHNVQNACAAIAIARELGVSDHATQKALTEFTGVGRRFTRYGEISFSAVNDKPAGSFALVDDYGHHPVETAATISAARGAYPGRRLVLAFQPHRYTRTRDLFEDFVKVLSTTDMLLLAEVYAAGEQPIVAADGRTLAHALRVAGKVDPVFVEHIVDMPATIMNIVRDGDVVITMGAGSISGVPAKLKQMQDQV</sequence>
<proteinExistence type="inferred from homology"/>
<reference key="1">
    <citation type="journal article" date="2007" name="PLoS Genet.">
        <title>A tale of two oxidation states: bacterial colonization of arsenic-rich environments.</title>
        <authorList>
            <person name="Muller D."/>
            <person name="Medigue C."/>
            <person name="Koechler S."/>
            <person name="Barbe V."/>
            <person name="Barakat M."/>
            <person name="Talla E."/>
            <person name="Bonnefoy V."/>
            <person name="Krin E."/>
            <person name="Arsene-Ploetze F."/>
            <person name="Carapito C."/>
            <person name="Chandler M."/>
            <person name="Cournoyer B."/>
            <person name="Cruveiller S."/>
            <person name="Dossat C."/>
            <person name="Duval S."/>
            <person name="Heymann M."/>
            <person name="Leize E."/>
            <person name="Lieutaud A."/>
            <person name="Lievremont D."/>
            <person name="Makita Y."/>
            <person name="Mangenot S."/>
            <person name="Nitschke W."/>
            <person name="Ortet P."/>
            <person name="Perdrial N."/>
            <person name="Schoepp B."/>
            <person name="Siguier P."/>
            <person name="Simeonova D.D."/>
            <person name="Rouy Z."/>
            <person name="Segurens B."/>
            <person name="Turlin E."/>
            <person name="Vallenet D."/>
            <person name="van Dorsselaer A."/>
            <person name="Weiss S."/>
            <person name="Weissenbach J."/>
            <person name="Lett M.-C."/>
            <person name="Danchin A."/>
            <person name="Bertin P.N."/>
        </authorList>
    </citation>
    <scope>NUCLEOTIDE SEQUENCE [LARGE SCALE GENOMIC DNA]</scope>
    <source>
        <strain>ULPAs1</strain>
    </source>
</reference>
<protein>
    <recommendedName>
        <fullName evidence="1">UDP-N-acetylmuramate--L-alanine ligase</fullName>
        <ecNumber evidence="1">6.3.2.8</ecNumber>
    </recommendedName>
    <alternativeName>
        <fullName evidence="1">UDP-N-acetylmuramoyl-L-alanine synthetase</fullName>
    </alternativeName>
</protein>
<evidence type="ECO:0000255" key="1">
    <source>
        <dbReference type="HAMAP-Rule" id="MF_00046"/>
    </source>
</evidence>
<keyword id="KW-0067">ATP-binding</keyword>
<keyword id="KW-0131">Cell cycle</keyword>
<keyword id="KW-0132">Cell division</keyword>
<keyword id="KW-0133">Cell shape</keyword>
<keyword id="KW-0961">Cell wall biogenesis/degradation</keyword>
<keyword id="KW-0963">Cytoplasm</keyword>
<keyword id="KW-0436">Ligase</keyword>
<keyword id="KW-0547">Nucleotide-binding</keyword>
<keyword id="KW-0573">Peptidoglycan synthesis</keyword>
<keyword id="KW-1185">Reference proteome</keyword>
<accession>A4G8T7</accession>
<comment type="function">
    <text evidence="1">Cell wall formation.</text>
</comment>
<comment type="catalytic activity">
    <reaction evidence="1">
        <text>UDP-N-acetyl-alpha-D-muramate + L-alanine + ATP = UDP-N-acetyl-alpha-D-muramoyl-L-alanine + ADP + phosphate + H(+)</text>
        <dbReference type="Rhea" id="RHEA:23372"/>
        <dbReference type="ChEBI" id="CHEBI:15378"/>
        <dbReference type="ChEBI" id="CHEBI:30616"/>
        <dbReference type="ChEBI" id="CHEBI:43474"/>
        <dbReference type="ChEBI" id="CHEBI:57972"/>
        <dbReference type="ChEBI" id="CHEBI:70757"/>
        <dbReference type="ChEBI" id="CHEBI:83898"/>
        <dbReference type="ChEBI" id="CHEBI:456216"/>
        <dbReference type="EC" id="6.3.2.8"/>
    </reaction>
</comment>
<comment type="pathway">
    <text evidence="1">Cell wall biogenesis; peptidoglycan biosynthesis.</text>
</comment>
<comment type="subcellular location">
    <subcellularLocation>
        <location evidence="1">Cytoplasm</location>
    </subcellularLocation>
</comment>
<comment type="similarity">
    <text evidence="1">Belongs to the MurCDEF family.</text>
</comment>
<name>MURC_HERAR</name>
<dbReference type="EC" id="6.3.2.8" evidence="1"/>
<dbReference type="EMBL" id="CU207211">
    <property type="protein sequence ID" value="CAL62924.1"/>
    <property type="molecule type" value="Genomic_DNA"/>
</dbReference>
<dbReference type="SMR" id="A4G8T7"/>
<dbReference type="STRING" id="204773.HEAR2810"/>
<dbReference type="KEGG" id="har:HEAR2810"/>
<dbReference type="eggNOG" id="COG0773">
    <property type="taxonomic scope" value="Bacteria"/>
</dbReference>
<dbReference type="HOGENOM" id="CLU_028104_2_2_4"/>
<dbReference type="OrthoDB" id="9804126at2"/>
<dbReference type="UniPathway" id="UPA00219"/>
<dbReference type="Proteomes" id="UP000006697">
    <property type="component" value="Chromosome"/>
</dbReference>
<dbReference type="GO" id="GO:0005737">
    <property type="term" value="C:cytoplasm"/>
    <property type="evidence" value="ECO:0007669"/>
    <property type="project" value="UniProtKB-SubCell"/>
</dbReference>
<dbReference type="GO" id="GO:0005524">
    <property type="term" value="F:ATP binding"/>
    <property type="evidence" value="ECO:0007669"/>
    <property type="project" value="UniProtKB-UniRule"/>
</dbReference>
<dbReference type="GO" id="GO:0008763">
    <property type="term" value="F:UDP-N-acetylmuramate-L-alanine ligase activity"/>
    <property type="evidence" value="ECO:0007669"/>
    <property type="project" value="UniProtKB-UniRule"/>
</dbReference>
<dbReference type="GO" id="GO:0051301">
    <property type="term" value="P:cell division"/>
    <property type="evidence" value="ECO:0007669"/>
    <property type="project" value="UniProtKB-KW"/>
</dbReference>
<dbReference type="GO" id="GO:0071555">
    <property type="term" value="P:cell wall organization"/>
    <property type="evidence" value="ECO:0007669"/>
    <property type="project" value="UniProtKB-KW"/>
</dbReference>
<dbReference type="GO" id="GO:0009252">
    <property type="term" value="P:peptidoglycan biosynthetic process"/>
    <property type="evidence" value="ECO:0007669"/>
    <property type="project" value="UniProtKB-UniRule"/>
</dbReference>
<dbReference type="GO" id="GO:0008360">
    <property type="term" value="P:regulation of cell shape"/>
    <property type="evidence" value="ECO:0007669"/>
    <property type="project" value="UniProtKB-KW"/>
</dbReference>
<dbReference type="FunFam" id="3.40.1190.10:FF:000001">
    <property type="entry name" value="UDP-N-acetylmuramate--L-alanine ligase"/>
    <property type="match status" value="1"/>
</dbReference>
<dbReference type="Gene3D" id="3.90.190.20">
    <property type="entry name" value="Mur ligase, C-terminal domain"/>
    <property type="match status" value="1"/>
</dbReference>
<dbReference type="Gene3D" id="3.40.1190.10">
    <property type="entry name" value="Mur-like, catalytic domain"/>
    <property type="match status" value="1"/>
</dbReference>
<dbReference type="Gene3D" id="3.40.50.720">
    <property type="entry name" value="NAD(P)-binding Rossmann-like Domain"/>
    <property type="match status" value="1"/>
</dbReference>
<dbReference type="HAMAP" id="MF_00046">
    <property type="entry name" value="MurC"/>
    <property type="match status" value="1"/>
</dbReference>
<dbReference type="InterPro" id="IPR036565">
    <property type="entry name" value="Mur-like_cat_sf"/>
</dbReference>
<dbReference type="InterPro" id="IPR004101">
    <property type="entry name" value="Mur_ligase_C"/>
</dbReference>
<dbReference type="InterPro" id="IPR036615">
    <property type="entry name" value="Mur_ligase_C_dom_sf"/>
</dbReference>
<dbReference type="InterPro" id="IPR013221">
    <property type="entry name" value="Mur_ligase_cen"/>
</dbReference>
<dbReference type="InterPro" id="IPR000713">
    <property type="entry name" value="Mur_ligase_N"/>
</dbReference>
<dbReference type="InterPro" id="IPR050061">
    <property type="entry name" value="MurCDEF_pg_biosynth"/>
</dbReference>
<dbReference type="InterPro" id="IPR005758">
    <property type="entry name" value="UDP-N-AcMur_Ala_ligase_MurC"/>
</dbReference>
<dbReference type="NCBIfam" id="TIGR01082">
    <property type="entry name" value="murC"/>
    <property type="match status" value="1"/>
</dbReference>
<dbReference type="PANTHER" id="PTHR43445:SF3">
    <property type="entry name" value="UDP-N-ACETYLMURAMATE--L-ALANINE LIGASE"/>
    <property type="match status" value="1"/>
</dbReference>
<dbReference type="PANTHER" id="PTHR43445">
    <property type="entry name" value="UDP-N-ACETYLMURAMATE--L-ALANINE LIGASE-RELATED"/>
    <property type="match status" value="1"/>
</dbReference>
<dbReference type="Pfam" id="PF01225">
    <property type="entry name" value="Mur_ligase"/>
    <property type="match status" value="1"/>
</dbReference>
<dbReference type="Pfam" id="PF02875">
    <property type="entry name" value="Mur_ligase_C"/>
    <property type="match status" value="1"/>
</dbReference>
<dbReference type="Pfam" id="PF08245">
    <property type="entry name" value="Mur_ligase_M"/>
    <property type="match status" value="1"/>
</dbReference>
<dbReference type="SUPFAM" id="SSF51984">
    <property type="entry name" value="MurCD N-terminal domain"/>
    <property type="match status" value="1"/>
</dbReference>
<dbReference type="SUPFAM" id="SSF53623">
    <property type="entry name" value="MurD-like peptide ligases, catalytic domain"/>
    <property type="match status" value="1"/>
</dbReference>
<dbReference type="SUPFAM" id="SSF53244">
    <property type="entry name" value="MurD-like peptide ligases, peptide-binding domain"/>
    <property type="match status" value="1"/>
</dbReference>
<feature type="chain" id="PRO_1000004352" description="UDP-N-acetylmuramate--L-alanine ligase">
    <location>
        <begin position="1"/>
        <end position="469"/>
    </location>
</feature>
<feature type="binding site" evidence="1">
    <location>
        <begin position="112"/>
        <end position="118"/>
    </location>
    <ligand>
        <name>ATP</name>
        <dbReference type="ChEBI" id="CHEBI:30616"/>
    </ligand>
</feature>
<gene>
    <name evidence="1" type="primary">murC</name>
    <name type="ordered locus">HEAR2810</name>
</gene>
<organism>
    <name type="scientific">Herminiimonas arsenicoxydans</name>
    <dbReference type="NCBI Taxonomy" id="204773"/>
    <lineage>
        <taxon>Bacteria</taxon>
        <taxon>Pseudomonadati</taxon>
        <taxon>Pseudomonadota</taxon>
        <taxon>Betaproteobacteria</taxon>
        <taxon>Burkholderiales</taxon>
        <taxon>Oxalobacteraceae</taxon>
        <taxon>Herminiimonas</taxon>
    </lineage>
</organism>